<dbReference type="EC" id="2.4.1.182"/>
<dbReference type="EMBL" id="AE004439">
    <property type="protein sequence ID" value="AAK04081.1"/>
    <property type="molecule type" value="Genomic_DNA"/>
</dbReference>
<dbReference type="RefSeq" id="WP_010907440.1">
    <property type="nucleotide sequence ID" value="NC_002663.1"/>
</dbReference>
<dbReference type="SMR" id="Q9CJK7"/>
<dbReference type="STRING" id="272843.PM1997"/>
<dbReference type="CAZy" id="GT19">
    <property type="family name" value="Glycosyltransferase Family 19"/>
</dbReference>
<dbReference type="EnsemblBacteria" id="AAK04081">
    <property type="protein sequence ID" value="AAK04081"/>
    <property type="gene ID" value="PM1997"/>
</dbReference>
<dbReference type="KEGG" id="pmu:PM1997"/>
<dbReference type="PATRIC" id="fig|272843.6.peg.2020"/>
<dbReference type="HOGENOM" id="CLU_036577_3_0_6"/>
<dbReference type="OrthoDB" id="9801642at2"/>
<dbReference type="UniPathway" id="UPA00973"/>
<dbReference type="Proteomes" id="UP000000809">
    <property type="component" value="Chromosome"/>
</dbReference>
<dbReference type="GO" id="GO:0016020">
    <property type="term" value="C:membrane"/>
    <property type="evidence" value="ECO:0007669"/>
    <property type="project" value="GOC"/>
</dbReference>
<dbReference type="GO" id="GO:0008915">
    <property type="term" value="F:lipid-A-disaccharide synthase activity"/>
    <property type="evidence" value="ECO:0007669"/>
    <property type="project" value="UniProtKB-UniRule"/>
</dbReference>
<dbReference type="GO" id="GO:0005543">
    <property type="term" value="F:phospholipid binding"/>
    <property type="evidence" value="ECO:0007669"/>
    <property type="project" value="TreeGrafter"/>
</dbReference>
<dbReference type="GO" id="GO:0009245">
    <property type="term" value="P:lipid A biosynthetic process"/>
    <property type="evidence" value="ECO:0007669"/>
    <property type="project" value="UniProtKB-UniRule"/>
</dbReference>
<dbReference type="CDD" id="cd01635">
    <property type="entry name" value="Glycosyltransferase_GTB-type"/>
    <property type="match status" value="1"/>
</dbReference>
<dbReference type="HAMAP" id="MF_00392">
    <property type="entry name" value="LpxB"/>
    <property type="match status" value="1"/>
</dbReference>
<dbReference type="InterPro" id="IPR003835">
    <property type="entry name" value="Glyco_trans_19"/>
</dbReference>
<dbReference type="NCBIfam" id="TIGR00215">
    <property type="entry name" value="lpxB"/>
    <property type="match status" value="1"/>
</dbReference>
<dbReference type="PANTHER" id="PTHR30372">
    <property type="entry name" value="LIPID-A-DISACCHARIDE SYNTHASE"/>
    <property type="match status" value="1"/>
</dbReference>
<dbReference type="PANTHER" id="PTHR30372:SF4">
    <property type="entry name" value="LIPID-A-DISACCHARIDE SYNTHASE, MITOCHONDRIAL-RELATED"/>
    <property type="match status" value="1"/>
</dbReference>
<dbReference type="Pfam" id="PF02684">
    <property type="entry name" value="LpxB"/>
    <property type="match status" value="1"/>
</dbReference>
<dbReference type="SUPFAM" id="SSF53756">
    <property type="entry name" value="UDP-Glycosyltransferase/glycogen phosphorylase"/>
    <property type="match status" value="1"/>
</dbReference>
<gene>
    <name type="primary">lpxB</name>
    <name type="ordered locus">PM1997</name>
</gene>
<comment type="function">
    <text evidence="1">Condensation of UDP-2,3-diacylglucosamine and 2,3-diacylglucosamine-1-phosphate to form lipid A disaccharide, a precursor of lipid A, a phosphorylated glycolipid that anchors the lipopolysaccharide to the outer membrane of the cell.</text>
</comment>
<comment type="catalytic activity">
    <reaction>
        <text>a lipid X + a UDP-2-N,3-O-bis[(3R)-3-hydroxyacyl]-alpha-D-glucosamine = a lipid A disaccharide + UDP + H(+)</text>
        <dbReference type="Rhea" id="RHEA:67828"/>
        <dbReference type="ChEBI" id="CHEBI:15378"/>
        <dbReference type="ChEBI" id="CHEBI:58223"/>
        <dbReference type="ChEBI" id="CHEBI:137748"/>
        <dbReference type="ChEBI" id="CHEBI:176338"/>
        <dbReference type="ChEBI" id="CHEBI:176343"/>
        <dbReference type="EC" id="2.4.1.182"/>
    </reaction>
</comment>
<comment type="pathway">
    <text>Bacterial outer membrane biogenesis; LPS lipid A biosynthesis.</text>
</comment>
<comment type="similarity">
    <text evidence="2">Belongs to the LpxB family.</text>
</comment>
<proteinExistence type="inferred from homology"/>
<sequence>MKEIHKQPPTIAIVAGEVSGDILGAGLIRSLKVQYPHARFIGIAGPRMLAEGAETLVDMEELSVMGLAEVVKHLPRLLKIRRQLIHTMLQEKPDIFIGIDAPDFNIDVELKLKENGIKTIHYVSPSVWAWRQNRIHKIAKATHLVLAFLPFEKAFYDRFEVPCRFIGHTMADAIALKPNRQEACEYLNLDASQRYVAILVGSRGSEVTFLAEPFLQAAKLLKQQYPDIQFLVPLINAKRREQFEQIKAQVAPELELILLDGKARQAMIAAEATLLASGTAALEAMLCKSPMVVGYRMKATTYFLAKRLVKTEYVSLPNLLANEMLVPELIQEQCTAENLAEKLALYLSQEESALQQRHTLIQRFTDLHKLIQCDADKQAAQAVIALLEQEDK</sequence>
<reference key="1">
    <citation type="journal article" date="2001" name="Proc. Natl. Acad. Sci. U.S.A.">
        <title>Complete genomic sequence of Pasteurella multocida Pm70.</title>
        <authorList>
            <person name="May B.J."/>
            <person name="Zhang Q."/>
            <person name="Li L.L."/>
            <person name="Paustian M.L."/>
            <person name="Whittam T.S."/>
            <person name="Kapur V."/>
        </authorList>
    </citation>
    <scope>NUCLEOTIDE SEQUENCE [LARGE SCALE GENOMIC DNA]</scope>
    <source>
        <strain>Pm70</strain>
    </source>
</reference>
<protein>
    <recommendedName>
        <fullName>Lipid-A-disaccharide synthase</fullName>
        <ecNumber>2.4.1.182</ecNumber>
    </recommendedName>
</protein>
<organism>
    <name type="scientific">Pasteurella multocida (strain Pm70)</name>
    <dbReference type="NCBI Taxonomy" id="272843"/>
    <lineage>
        <taxon>Bacteria</taxon>
        <taxon>Pseudomonadati</taxon>
        <taxon>Pseudomonadota</taxon>
        <taxon>Gammaproteobacteria</taxon>
        <taxon>Pasteurellales</taxon>
        <taxon>Pasteurellaceae</taxon>
        <taxon>Pasteurella</taxon>
    </lineage>
</organism>
<keyword id="KW-0328">Glycosyltransferase</keyword>
<keyword id="KW-0441">Lipid A biosynthesis</keyword>
<keyword id="KW-0444">Lipid biosynthesis</keyword>
<keyword id="KW-0443">Lipid metabolism</keyword>
<keyword id="KW-1185">Reference proteome</keyword>
<keyword id="KW-0808">Transferase</keyword>
<accession>Q9CJK7</accession>
<evidence type="ECO:0000250" key="1"/>
<evidence type="ECO:0000305" key="2"/>
<name>LPXB_PASMU</name>
<feature type="chain" id="PRO_0000190173" description="Lipid-A-disaccharide synthase">
    <location>
        <begin position="1"/>
        <end position="392"/>
    </location>
</feature>